<gene>
    <name evidence="1" type="primary">rnhB</name>
    <name type="ordered locus">FP1200</name>
</gene>
<reference key="1">
    <citation type="journal article" date="2007" name="Nat. Biotechnol.">
        <title>Complete genome sequence of the fish pathogen Flavobacterium psychrophilum.</title>
        <authorList>
            <person name="Duchaud E."/>
            <person name="Boussaha M."/>
            <person name="Loux V."/>
            <person name="Bernardet J.-F."/>
            <person name="Michel C."/>
            <person name="Kerouault B."/>
            <person name="Mondot S."/>
            <person name="Nicolas P."/>
            <person name="Bossy R."/>
            <person name="Caron C."/>
            <person name="Bessieres P."/>
            <person name="Gibrat J.-F."/>
            <person name="Claverol S."/>
            <person name="Dumetz F."/>
            <person name="Le Henaff M."/>
            <person name="Benmansour A."/>
        </authorList>
    </citation>
    <scope>NUCLEOTIDE SEQUENCE [LARGE SCALE GENOMIC DNA]</scope>
    <source>
        <strain>ATCC 49511 / DSM 21280 / CIP 103535 / JIP02/86</strain>
    </source>
</reference>
<accession>A6GYW0</accession>
<organism>
    <name type="scientific">Flavobacterium psychrophilum (strain ATCC 49511 / DSM 21280 / CIP 103535 / JIP02/86)</name>
    <dbReference type="NCBI Taxonomy" id="402612"/>
    <lineage>
        <taxon>Bacteria</taxon>
        <taxon>Pseudomonadati</taxon>
        <taxon>Bacteroidota</taxon>
        <taxon>Flavobacteriia</taxon>
        <taxon>Flavobacteriales</taxon>
        <taxon>Flavobacteriaceae</taxon>
        <taxon>Flavobacterium</taxon>
    </lineage>
</organism>
<name>RNH2_FLAPJ</name>
<feature type="chain" id="PRO_0000334897" description="Ribonuclease HII">
    <location>
        <begin position="1"/>
        <end position="219"/>
    </location>
</feature>
<feature type="domain" description="RNase H type-2" evidence="2">
    <location>
        <begin position="10"/>
        <end position="219"/>
    </location>
</feature>
<feature type="binding site" evidence="1">
    <location>
        <position position="16"/>
    </location>
    <ligand>
        <name>a divalent metal cation</name>
        <dbReference type="ChEBI" id="CHEBI:60240"/>
    </ligand>
</feature>
<feature type="binding site" evidence="1">
    <location>
        <position position="17"/>
    </location>
    <ligand>
        <name>a divalent metal cation</name>
        <dbReference type="ChEBI" id="CHEBI:60240"/>
    </ligand>
</feature>
<feature type="binding site" evidence="1">
    <location>
        <position position="108"/>
    </location>
    <ligand>
        <name>a divalent metal cation</name>
        <dbReference type="ChEBI" id="CHEBI:60240"/>
    </ligand>
</feature>
<evidence type="ECO:0000255" key="1">
    <source>
        <dbReference type="HAMAP-Rule" id="MF_00052"/>
    </source>
</evidence>
<evidence type="ECO:0000255" key="2">
    <source>
        <dbReference type="PROSITE-ProRule" id="PRU01319"/>
    </source>
</evidence>
<protein>
    <recommendedName>
        <fullName evidence="1">Ribonuclease HII</fullName>
        <shortName evidence="1">RNase HII</shortName>
        <ecNumber evidence="1">3.1.26.4</ecNumber>
    </recommendedName>
</protein>
<keyword id="KW-0963">Cytoplasm</keyword>
<keyword id="KW-0255">Endonuclease</keyword>
<keyword id="KW-0378">Hydrolase</keyword>
<keyword id="KW-0464">Manganese</keyword>
<keyword id="KW-0479">Metal-binding</keyword>
<keyword id="KW-0540">Nuclease</keyword>
<keyword id="KW-1185">Reference proteome</keyword>
<proteinExistence type="inferred from homology"/>
<dbReference type="EC" id="3.1.26.4" evidence="1"/>
<dbReference type="EMBL" id="AM398681">
    <property type="protein sequence ID" value="CAL43283.1"/>
    <property type="molecule type" value="Genomic_DNA"/>
</dbReference>
<dbReference type="RefSeq" id="WP_011963332.1">
    <property type="nucleotide sequence ID" value="NC_009613.3"/>
</dbReference>
<dbReference type="RefSeq" id="YP_001296094.1">
    <property type="nucleotide sequence ID" value="NC_009613.3"/>
</dbReference>
<dbReference type="SMR" id="A6GYW0"/>
<dbReference type="STRING" id="402612.FP1200"/>
<dbReference type="EnsemblBacteria" id="CAL43283">
    <property type="protein sequence ID" value="CAL43283"/>
    <property type="gene ID" value="FP1200"/>
</dbReference>
<dbReference type="KEGG" id="fps:FP1200"/>
<dbReference type="PATRIC" id="fig|402612.5.peg.1214"/>
<dbReference type="eggNOG" id="COG0164">
    <property type="taxonomic scope" value="Bacteria"/>
</dbReference>
<dbReference type="HOGENOM" id="CLU_036532_3_1_10"/>
<dbReference type="OrthoDB" id="9803420at2"/>
<dbReference type="Proteomes" id="UP000006394">
    <property type="component" value="Chromosome"/>
</dbReference>
<dbReference type="GO" id="GO:0005737">
    <property type="term" value="C:cytoplasm"/>
    <property type="evidence" value="ECO:0007669"/>
    <property type="project" value="UniProtKB-SubCell"/>
</dbReference>
<dbReference type="GO" id="GO:0032299">
    <property type="term" value="C:ribonuclease H2 complex"/>
    <property type="evidence" value="ECO:0007669"/>
    <property type="project" value="TreeGrafter"/>
</dbReference>
<dbReference type="GO" id="GO:0030145">
    <property type="term" value="F:manganese ion binding"/>
    <property type="evidence" value="ECO:0007669"/>
    <property type="project" value="UniProtKB-UniRule"/>
</dbReference>
<dbReference type="GO" id="GO:0003723">
    <property type="term" value="F:RNA binding"/>
    <property type="evidence" value="ECO:0007669"/>
    <property type="project" value="InterPro"/>
</dbReference>
<dbReference type="GO" id="GO:0004523">
    <property type="term" value="F:RNA-DNA hybrid ribonuclease activity"/>
    <property type="evidence" value="ECO:0007669"/>
    <property type="project" value="UniProtKB-UniRule"/>
</dbReference>
<dbReference type="GO" id="GO:0043137">
    <property type="term" value="P:DNA replication, removal of RNA primer"/>
    <property type="evidence" value="ECO:0007669"/>
    <property type="project" value="TreeGrafter"/>
</dbReference>
<dbReference type="GO" id="GO:0006298">
    <property type="term" value="P:mismatch repair"/>
    <property type="evidence" value="ECO:0007669"/>
    <property type="project" value="TreeGrafter"/>
</dbReference>
<dbReference type="CDD" id="cd07182">
    <property type="entry name" value="RNase_HII_bacteria_HII_like"/>
    <property type="match status" value="1"/>
</dbReference>
<dbReference type="Gene3D" id="3.30.420.10">
    <property type="entry name" value="Ribonuclease H-like superfamily/Ribonuclease H"/>
    <property type="match status" value="1"/>
</dbReference>
<dbReference type="HAMAP" id="MF_00052_B">
    <property type="entry name" value="RNase_HII_B"/>
    <property type="match status" value="1"/>
</dbReference>
<dbReference type="InterPro" id="IPR022898">
    <property type="entry name" value="RNase_HII"/>
</dbReference>
<dbReference type="InterPro" id="IPR001352">
    <property type="entry name" value="RNase_HII/HIII"/>
</dbReference>
<dbReference type="InterPro" id="IPR024567">
    <property type="entry name" value="RNase_HII/HIII_dom"/>
</dbReference>
<dbReference type="InterPro" id="IPR012337">
    <property type="entry name" value="RNaseH-like_sf"/>
</dbReference>
<dbReference type="InterPro" id="IPR036397">
    <property type="entry name" value="RNaseH_sf"/>
</dbReference>
<dbReference type="NCBIfam" id="NF000595">
    <property type="entry name" value="PRK00015.1-3"/>
    <property type="match status" value="1"/>
</dbReference>
<dbReference type="PANTHER" id="PTHR10954">
    <property type="entry name" value="RIBONUCLEASE H2 SUBUNIT A"/>
    <property type="match status" value="1"/>
</dbReference>
<dbReference type="PANTHER" id="PTHR10954:SF18">
    <property type="entry name" value="RIBONUCLEASE HII"/>
    <property type="match status" value="1"/>
</dbReference>
<dbReference type="Pfam" id="PF01351">
    <property type="entry name" value="RNase_HII"/>
    <property type="match status" value="1"/>
</dbReference>
<dbReference type="SUPFAM" id="SSF53098">
    <property type="entry name" value="Ribonuclease H-like"/>
    <property type="match status" value="1"/>
</dbReference>
<dbReference type="PROSITE" id="PS51975">
    <property type="entry name" value="RNASE_H_2"/>
    <property type="match status" value="1"/>
</dbReference>
<sequence>MLSSFFLTQHLEAGTDEAGRGCLAGPVTAAAVILPENFESKILNDSKQLSEKTREQLKPIIEALAISFSVTHLDPLIIDEINILNASLKAMQECVLQLNPTPLYIIADGNRPLLSKNSFKKCSGKIFTNREIEILQSIPSSSIIKGDSKYLSIAAASVLAKTYRDEYMNTIHEEFPMYNWKKNKGYPTKEHREAIRKYGVTKYHRMTFRLLPEQTVLDL</sequence>
<comment type="function">
    <text evidence="1">Endonuclease that specifically degrades the RNA of RNA-DNA hybrids.</text>
</comment>
<comment type="catalytic activity">
    <reaction evidence="1">
        <text>Endonucleolytic cleavage to 5'-phosphomonoester.</text>
        <dbReference type="EC" id="3.1.26.4"/>
    </reaction>
</comment>
<comment type="cofactor">
    <cofactor evidence="1">
        <name>Mn(2+)</name>
        <dbReference type="ChEBI" id="CHEBI:29035"/>
    </cofactor>
    <cofactor evidence="1">
        <name>Mg(2+)</name>
        <dbReference type="ChEBI" id="CHEBI:18420"/>
    </cofactor>
    <text evidence="1">Manganese or magnesium. Binds 1 divalent metal ion per monomer in the absence of substrate. May bind a second metal ion after substrate binding.</text>
</comment>
<comment type="subcellular location">
    <subcellularLocation>
        <location evidence="1">Cytoplasm</location>
    </subcellularLocation>
</comment>
<comment type="similarity">
    <text evidence="1">Belongs to the RNase HII family.</text>
</comment>